<feature type="chain" id="PRO_0000365452" description="E3 ubiquitin-protein ligase MYLIP-B">
    <location>
        <begin position="1"/>
        <end position="464"/>
    </location>
</feature>
<feature type="domain" description="FERM" evidence="3">
    <location>
        <begin position="1"/>
        <end position="279"/>
    </location>
</feature>
<feature type="zinc finger region" description="RING-type" evidence="4">
    <location>
        <begin position="381"/>
        <end position="416"/>
    </location>
</feature>
<organism>
    <name type="scientific">Danio rerio</name>
    <name type="common">Zebrafish</name>
    <name type="synonym">Brachydanio rerio</name>
    <dbReference type="NCBI Taxonomy" id="7955"/>
    <lineage>
        <taxon>Eukaryota</taxon>
        <taxon>Metazoa</taxon>
        <taxon>Chordata</taxon>
        <taxon>Craniata</taxon>
        <taxon>Vertebrata</taxon>
        <taxon>Euteleostomi</taxon>
        <taxon>Actinopterygii</taxon>
        <taxon>Neopterygii</taxon>
        <taxon>Teleostei</taxon>
        <taxon>Ostariophysi</taxon>
        <taxon>Cypriniformes</taxon>
        <taxon>Danionidae</taxon>
        <taxon>Danioninae</taxon>
        <taxon>Danio</taxon>
    </lineage>
</organism>
<proteinExistence type="evidence at transcript level"/>
<comment type="function">
    <text evidence="1">E3 ubiquitin-protein ligase that mediates ubiquitination and subsequent proteasomal degradation of myosin regulatory light chain (MRLC). Regulates cell movements during gastrulation by acting downstream of fz7 to antagonize the frizzled-signaling pathway (By similarity).</text>
</comment>
<comment type="catalytic activity">
    <reaction>
        <text>S-ubiquitinyl-[E2 ubiquitin-conjugating enzyme]-L-cysteine + [acceptor protein]-L-lysine = [E2 ubiquitin-conjugating enzyme]-L-cysteine + N(6)-ubiquitinyl-[acceptor protein]-L-lysine.</text>
        <dbReference type="EC" id="2.3.2.27"/>
    </reaction>
</comment>
<comment type="pathway">
    <text evidence="5">Protein modification; protein ubiquitination.</text>
</comment>
<comment type="subunit">
    <text evidence="2">Interacts with anxa5.</text>
</comment>
<comment type="subcellular location">
    <subcellularLocation>
        <location evidence="2">Cytoplasm</location>
        <location evidence="2">Cytosol</location>
    </subcellularLocation>
</comment>
<keyword id="KW-0963">Cytoplasm</keyword>
<keyword id="KW-0217">Developmental protein</keyword>
<keyword id="KW-0306">Gastrulation</keyword>
<keyword id="KW-0479">Metal-binding</keyword>
<keyword id="KW-1185">Reference proteome</keyword>
<keyword id="KW-0808">Transferase</keyword>
<keyword id="KW-0833">Ubl conjugation pathway</keyword>
<keyword id="KW-0862">Zinc</keyword>
<keyword id="KW-0863">Zinc-finger</keyword>
<protein>
    <recommendedName>
        <fullName evidence="2">E3 ubiquitin-protein ligase MYLIP-B</fullName>
        <ecNumber>2.3.2.27</ecNumber>
    </recommendedName>
    <alternativeName>
        <fullName>Myosin regulatory light chain-interacting protein B</fullName>
        <shortName>MIR-B</shortName>
    </alternativeName>
    <alternativeName>
        <fullName evidence="5">RING-type E3 ubiquitin transferase MYLIP-B</fullName>
    </alternativeName>
</protein>
<reference evidence="6" key="1">
    <citation type="submission" date="2006-09" db="EMBL/GenBank/DDBJ databases">
        <authorList>
            <consortium name="NIH - Zebrafish Gene Collection (ZGC) project"/>
        </authorList>
    </citation>
    <scope>NUCLEOTIDE SEQUENCE [LARGE SCALE MRNA]</scope>
    <source>
        <tissue evidence="6">Olfactory epithelium</tissue>
    </source>
</reference>
<evidence type="ECO:0000250" key="1"/>
<evidence type="ECO:0000250" key="2">
    <source>
        <dbReference type="UniProtKB" id="Q6TEM9"/>
    </source>
</evidence>
<evidence type="ECO:0000255" key="3">
    <source>
        <dbReference type="PROSITE-ProRule" id="PRU00084"/>
    </source>
</evidence>
<evidence type="ECO:0000255" key="4">
    <source>
        <dbReference type="PROSITE-ProRule" id="PRU00175"/>
    </source>
</evidence>
<evidence type="ECO:0000305" key="5"/>
<evidence type="ECO:0000312" key="6">
    <source>
        <dbReference type="EMBL" id="AAI24451.1"/>
    </source>
</evidence>
<evidence type="ECO:0000312" key="7">
    <source>
        <dbReference type="ZFIN" id="ZDB-GENE-061027-67"/>
    </source>
</evidence>
<gene>
    <name evidence="7" type="primary">mylipb</name>
    <name type="ORF">zgc:153767</name>
</gene>
<dbReference type="EC" id="2.3.2.27"/>
<dbReference type="EMBL" id="BC124450">
    <property type="protein sequence ID" value="AAI24451.1"/>
    <property type="molecule type" value="mRNA"/>
</dbReference>
<dbReference type="RefSeq" id="NP_001073491.1">
    <property type="nucleotide sequence ID" value="NM_001080022.2"/>
</dbReference>
<dbReference type="SMR" id="Q05AK5"/>
<dbReference type="FunCoup" id="Q05AK5">
    <property type="interactions" value="23"/>
</dbReference>
<dbReference type="STRING" id="7955.ENSDARP00000071903"/>
<dbReference type="PaxDb" id="7955-ENSDARP00000071903"/>
<dbReference type="GeneID" id="565911"/>
<dbReference type="KEGG" id="dre:565911"/>
<dbReference type="AGR" id="ZFIN:ZDB-GENE-061027-67"/>
<dbReference type="CTD" id="565911"/>
<dbReference type="ZFIN" id="ZDB-GENE-061027-67">
    <property type="gene designation" value="mylipb"/>
</dbReference>
<dbReference type="eggNOG" id="ENOG502QV76">
    <property type="taxonomic scope" value="Eukaryota"/>
</dbReference>
<dbReference type="InParanoid" id="Q05AK5"/>
<dbReference type="OrthoDB" id="10037309at2759"/>
<dbReference type="PhylomeDB" id="Q05AK5"/>
<dbReference type="UniPathway" id="UPA00143"/>
<dbReference type="PRO" id="PR:Q05AK5"/>
<dbReference type="Proteomes" id="UP000000437">
    <property type="component" value="Chromosome 16"/>
</dbReference>
<dbReference type="GO" id="GO:0005737">
    <property type="term" value="C:cytoplasm"/>
    <property type="evidence" value="ECO:0000250"/>
    <property type="project" value="UniProtKB"/>
</dbReference>
<dbReference type="GO" id="GO:0005856">
    <property type="term" value="C:cytoskeleton"/>
    <property type="evidence" value="ECO:0007669"/>
    <property type="project" value="InterPro"/>
</dbReference>
<dbReference type="GO" id="GO:0005829">
    <property type="term" value="C:cytosol"/>
    <property type="evidence" value="ECO:0007669"/>
    <property type="project" value="UniProtKB-SubCell"/>
</dbReference>
<dbReference type="GO" id="GO:0004842">
    <property type="term" value="F:ubiquitin-protein transferase activity"/>
    <property type="evidence" value="ECO:0000318"/>
    <property type="project" value="GO_Central"/>
</dbReference>
<dbReference type="GO" id="GO:0008270">
    <property type="term" value="F:zinc ion binding"/>
    <property type="evidence" value="ECO:0007669"/>
    <property type="project" value="UniProtKB-KW"/>
</dbReference>
<dbReference type="GO" id="GO:0007369">
    <property type="term" value="P:gastrulation"/>
    <property type="evidence" value="ECO:0000250"/>
    <property type="project" value="UniProtKB"/>
</dbReference>
<dbReference type="GO" id="GO:0030178">
    <property type="term" value="P:negative regulation of Wnt signaling pathway"/>
    <property type="evidence" value="ECO:0000250"/>
    <property type="project" value="UniProtKB"/>
</dbReference>
<dbReference type="GO" id="GO:0016567">
    <property type="term" value="P:protein ubiquitination"/>
    <property type="evidence" value="ECO:0007669"/>
    <property type="project" value="UniProtKB-UniPathway"/>
</dbReference>
<dbReference type="GO" id="GO:0006511">
    <property type="term" value="P:ubiquitin-dependent protein catabolic process"/>
    <property type="evidence" value="ECO:0000318"/>
    <property type="project" value="GO_Central"/>
</dbReference>
<dbReference type="CDD" id="cd14473">
    <property type="entry name" value="FERM_B-lobe"/>
    <property type="match status" value="1"/>
</dbReference>
<dbReference type="CDD" id="cd13195">
    <property type="entry name" value="FERM_C_MYLIP_IDOL"/>
    <property type="match status" value="1"/>
</dbReference>
<dbReference type="CDD" id="cd17104">
    <property type="entry name" value="FERM_F1_MYLIP"/>
    <property type="match status" value="1"/>
</dbReference>
<dbReference type="CDD" id="cd16523">
    <property type="entry name" value="RING-HC_MYLIP"/>
    <property type="match status" value="1"/>
</dbReference>
<dbReference type="FunFam" id="1.20.80.10:FF:000019">
    <property type="entry name" value="E3 ubiquitin-protein ligase MYLIP"/>
    <property type="match status" value="1"/>
</dbReference>
<dbReference type="FunFam" id="3.10.20.90:FF:000129">
    <property type="entry name" value="E3 ubiquitin-protein ligase MYLIP isoform X1"/>
    <property type="match status" value="1"/>
</dbReference>
<dbReference type="FunFam" id="2.30.29.30:FF:000164">
    <property type="entry name" value="Putative E3 ubiquitin-protein ligase MYLIP"/>
    <property type="match status" value="1"/>
</dbReference>
<dbReference type="FunFam" id="3.30.40.10:FF:000175">
    <property type="entry name" value="Putative E3 ubiquitin-protein ligase MYLIP"/>
    <property type="match status" value="1"/>
</dbReference>
<dbReference type="Gene3D" id="1.20.80.10">
    <property type="match status" value="1"/>
</dbReference>
<dbReference type="Gene3D" id="3.10.20.90">
    <property type="entry name" value="Phosphatidylinositol 3-kinase Catalytic Subunit, Chain A, domain 1"/>
    <property type="match status" value="1"/>
</dbReference>
<dbReference type="Gene3D" id="2.30.29.30">
    <property type="entry name" value="Pleckstrin-homology domain (PH domain)/Phosphotyrosine-binding domain (PTB)"/>
    <property type="match status" value="1"/>
</dbReference>
<dbReference type="Gene3D" id="3.30.40.10">
    <property type="entry name" value="Zinc/RING finger domain, C3HC4 (zinc finger)"/>
    <property type="match status" value="1"/>
</dbReference>
<dbReference type="InterPro" id="IPR019749">
    <property type="entry name" value="Band_41_domain"/>
</dbReference>
<dbReference type="InterPro" id="IPR014352">
    <property type="entry name" value="FERM/acyl-CoA-bd_prot_sf"/>
</dbReference>
<dbReference type="InterPro" id="IPR035963">
    <property type="entry name" value="FERM_2"/>
</dbReference>
<dbReference type="InterPro" id="IPR019748">
    <property type="entry name" value="FERM_central"/>
</dbReference>
<dbReference type="InterPro" id="IPR000299">
    <property type="entry name" value="FERM_domain"/>
</dbReference>
<dbReference type="InterPro" id="IPR018979">
    <property type="entry name" value="FERM_N"/>
</dbReference>
<dbReference type="InterPro" id="IPR018980">
    <property type="entry name" value="FERM_PH-like_C"/>
</dbReference>
<dbReference type="InterPro" id="IPR041790">
    <property type="entry name" value="MYLIP_FERM_C"/>
</dbReference>
<dbReference type="InterPro" id="IPR011993">
    <property type="entry name" value="PH-like_dom_sf"/>
</dbReference>
<dbReference type="InterPro" id="IPR029071">
    <property type="entry name" value="Ubiquitin-like_domsf"/>
</dbReference>
<dbReference type="InterPro" id="IPR001841">
    <property type="entry name" value="Znf_RING"/>
</dbReference>
<dbReference type="InterPro" id="IPR013083">
    <property type="entry name" value="Znf_RING/FYVE/PHD"/>
</dbReference>
<dbReference type="PANTHER" id="PTHR23280">
    <property type="entry name" value="4.1 G PROTEIN"/>
    <property type="match status" value="1"/>
</dbReference>
<dbReference type="PANTHER" id="PTHR23280:SF13">
    <property type="entry name" value="E3 UBIQUITIN-PROTEIN LIGASE MYLIP"/>
    <property type="match status" value="1"/>
</dbReference>
<dbReference type="Pfam" id="PF00373">
    <property type="entry name" value="FERM_M"/>
    <property type="match status" value="1"/>
</dbReference>
<dbReference type="Pfam" id="PF09379">
    <property type="entry name" value="FERM_N"/>
    <property type="match status" value="1"/>
</dbReference>
<dbReference type="Pfam" id="PF13920">
    <property type="entry name" value="zf-C3HC4_3"/>
    <property type="match status" value="1"/>
</dbReference>
<dbReference type="PRINTS" id="PR00935">
    <property type="entry name" value="BAND41"/>
</dbReference>
<dbReference type="SMART" id="SM00295">
    <property type="entry name" value="B41"/>
    <property type="match status" value="1"/>
</dbReference>
<dbReference type="SMART" id="SM01196">
    <property type="entry name" value="FERM_C"/>
    <property type="match status" value="1"/>
</dbReference>
<dbReference type="SUPFAM" id="SSF50729">
    <property type="entry name" value="PH domain-like"/>
    <property type="match status" value="1"/>
</dbReference>
<dbReference type="SUPFAM" id="SSF57850">
    <property type="entry name" value="RING/U-box"/>
    <property type="match status" value="1"/>
</dbReference>
<dbReference type="SUPFAM" id="SSF47031">
    <property type="entry name" value="Second domain of FERM"/>
    <property type="match status" value="1"/>
</dbReference>
<dbReference type="SUPFAM" id="SSF54236">
    <property type="entry name" value="Ubiquitin-like"/>
    <property type="match status" value="1"/>
</dbReference>
<dbReference type="PROSITE" id="PS50057">
    <property type="entry name" value="FERM_3"/>
    <property type="match status" value="1"/>
</dbReference>
<dbReference type="PROSITE" id="PS50089">
    <property type="entry name" value="ZF_RING_2"/>
    <property type="match status" value="1"/>
</dbReference>
<sequence length="464" mass="52661">MLCHITRPDSVVLEVEVDPKANGEDILNKICQKMGIIEVDYFGLQFTGTKGESLWMNLRNRICQEVDCVSPCRLRLRVKFFVEPHLILQEQTRHLFLMHVKEEIIKGSLRLDAEQAIELCALLAQAEFGDYKQNTAKYCYSQIYGQDPSHDTINTISLKHKSLEGVSQASAEYQALQLVSSLTYYGVEWHFARDSEGQQLLIGVGQEGLFVCKSDFTPIERLMYPVIQMATQSGRNVYVTITKDNGDSVVLLFKFVSPSAANGLYRAITEIHAFYRCDTVMSTVKMQYSRDFKGHLASLFLNESIDLGKRYIFDIQRTSKEVYDRTRRALFNAGVSVNGRGISRSLLRQTKVDREERMCVDCRETHVLKEKLQRLQEALTCALCCEQEISAAFCPCGHMFCCYNCASQLQCCPVCRSEVDRVQHVYLPTCASLLGLAEAKTTNSVLRRTGISEDCANKENARQM</sequence>
<name>MYLIB_DANRE</name>
<accession>Q05AK5</accession>